<evidence type="ECO:0000250" key="1">
    <source>
        <dbReference type="UniProtKB" id="G1SPE9"/>
    </source>
</evidence>
<evidence type="ECO:0000250" key="2">
    <source>
        <dbReference type="UniProtKB" id="P10349"/>
    </source>
</evidence>
<evidence type="ECO:0000250" key="3">
    <source>
        <dbReference type="UniProtKB" id="P98192"/>
    </source>
</evidence>
<evidence type="ECO:0000250" key="4">
    <source>
        <dbReference type="UniProtKB" id="Q9ES71"/>
    </source>
</evidence>
<evidence type="ECO:0000255" key="5"/>
<evidence type="ECO:0000269" key="6">
    <source>
    </source>
</evidence>
<evidence type="ECO:0000269" key="7">
    <source>
    </source>
</evidence>
<evidence type="ECO:0000269" key="8">
    <source>
    </source>
</evidence>
<evidence type="ECO:0000269" key="9">
    <source>
    </source>
</evidence>
<evidence type="ECO:0000269" key="10">
    <source>
    </source>
</evidence>
<evidence type="ECO:0000269" key="11">
    <source>
    </source>
</evidence>
<evidence type="ECO:0000303" key="12">
    <source>
    </source>
</evidence>
<evidence type="ECO:0000303" key="13">
    <source>
    </source>
</evidence>
<evidence type="ECO:0000303" key="14">
    <source>
    </source>
</evidence>
<evidence type="ECO:0000303" key="15">
    <source>
    </source>
</evidence>
<evidence type="ECO:0000303" key="16">
    <source>
    </source>
</evidence>
<evidence type="ECO:0000305" key="17"/>
<evidence type="ECO:0000305" key="18">
    <source>
    </source>
</evidence>
<evidence type="ECO:0000312" key="19">
    <source>
        <dbReference type="HGNC" id="HGNC:4416"/>
    </source>
</evidence>
<evidence type="ECO:0007744" key="20">
    <source>
    </source>
</evidence>
<name>GNPAT_HUMAN</name>
<proteinExistence type="evidence at protein level"/>
<reference key="1">
    <citation type="journal article" date="1997" name="FEBS Lett.">
        <title>Ether lipid biosynthesis: isolation and molecular characterization of human dihydroxyacetonephosphate acyltransferase.</title>
        <authorList>
            <person name="Thai T.-P."/>
            <person name="Heid H."/>
            <person name="Rackwitz H.-R."/>
            <person name="Hunziker A."/>
            <person name="Gorgas K."/>
            <person name="Just W.W."/>
        </authorList>
    </citation>
    <scope>NUCLEOTIDE SEQUENCE [MRNA] (ISOFORM 1)</scope>
    <source>
        <tissue>Brain</tissue>
    </source>
</reference>
<reference key="2">
    <citation type="journal article" date="1998" name="Hum. Mol. Genet.">
        <title>Acyl-CoA:dihydroxyacetonephosphate acyltransferase: cloning of the human cDNA and resolution of the molecular basis in rhizomelic chondrodysplasia punctata type 2.</title>
        <authorList>
            <person name="Ofman R."/>
            <person name="Hettema E.H."/>
            <person name="Hogenhout E.M."/>
            <person name="Caruso U."/>
            <person name="Muijsers A.O."/>
            <person name="Wanders R.J.A."/>
        </authorList>
    </citation>
    <scope>NUCLEOTIDE SEQUENCE [MRNA] (ISOFORM 1)</scope>
    <scope>PROTEIN SEQUENCE OF 12-33</scope>
    <scope>VARIANTS RCDP2 CYS-211 AND HIS-211</scope>
</reference>
<reference key="3">
    <citation type="journal article" date="2001" name="Biochem. Biophys. Res. Commun.">
        <title>Etherphospholipid biosynthesis and dihydroxyactetone-phosphate acyltransferase: resolution of the genomic organization of the human GNPAT gene and its use in the identification of novel mutations.</title>
        <authorList>
            <person name="Ofman R."/>
            <person name="Lajmir S."/>
            <person name="Wanders R.J.A."/>
        </authorList>
    </citation>
    <scope>NUCLEOTIDE SEQUENCE [GENOMIC DNA]</scope>
</reference>
<reference key="4">
    <citation type="journal article" date="2004" name="Nat. Genet.">
        <title>Complete sequencing and characterization of 21,243 full-length human cDNAs.</title>
        <authorList>
            <person name="Ota T."/>
            <person name="Suzuki Y."/>
            <person name="Nishikawa T."/>
            <person name="Otsuki T."/>
            <person name="Sugiyama T."/>
            <person name="Irie R."/>
            <person name="Wakamatsu A."/>
            <person name="Hayashi K."/>
            <person name="Sato H."/>
            <person name="Nagai K."/>
            <person name="Kimura K."/>
            <person name="Makita H."/>
            <person name="Sekine M."/>
            <person name="Obayashi M."/>
            <person name="Nishi T."/>
            <person name="Shibahara T."/>
            <person name="Tanaka T."/>
            <person name="Ishii S."/>
            <person name="Yamamoto J."/>
            <person name="Saito K."/>
            <person name="Kawai Y."/>
            <person name="Isono Y."/>
            <person name="Nakamura Y."/>
            <person name="Nagahari K."/>
            <person name="Murakami K."/>
            <person name="Yasuda T."/>
            <person name="Iwayanagi T."/>
            <person name="Wagatsuma M."/>
            <person name="Shiratori A."/>
            <person name="Sudo H."/>
            <person name="Hosoiri T."/>
            <person name="Kaku Y."/>
            <person name="Kodaira H."/>
            <person name="Kondo H."/>
            <person name="Sugawara M."/>
            <person name="Takahashi M."/>
            <person name="Kanda K."/>
            <person name="Yokoi T."/>
            <person name="Furuya T."/>
            <person name="Kikkawa E."/>
            <person name="Omura Y."/>
            <person name="Abe K."/>
            <person name="Kamihara K."/>
            <person name="Katsuta N."/>
            <person name="Sato K."/>
            <person name="Tanikawa M."/>
            <person name="Yamazaki M."/>
            <person name="Ninomiya K."/>
            <person name="Ishibashi T."/>
            <person name="Yamashita H."/>
            <person name="Murakawa K."/>
            <person name="Fujimori K."/>
            <person name="Tanai H."/>
            <person name="Kimata M."/>
            <person name="Watanabe M."/>
            <person name="Hiraoka S."/>
            <person name="Chiba Y."/>
            <person name="Ishida S."/>
            <person name="Ono Y."/>
            <person name="Takiguchi S."/>
            <person name="Watanabe S."/>
            <person name="Yosida M."/>
            <person name="Hotuta T."/>
            <person name="Kusano J."/>
            <person name="Kanehori K."/>
            <person name="Takahashi-Fujii A."/>
            <person name="Hara H."/>
            <person name="Tanase T.-O."/>
            <person name="Nomura Y."/>
            <person name="Togiya S."/>
            <person name="Komai F."/>
            <person name="Hara R."/>
            <person name="Takeuchi K."/>
            <person name="Arita M."/>
            <person name="Imose N."/>
            <person name="Musashino K."/>
            <person name="Yuuki H."/>
            <person name="Oshima A."/>
            <person name="Sasaki N."/>
            <person name="Aotsuka S."/>
            <person name="Yoshikawa Y."/>
            <person name="Matsunawa H."/>
            <person name="Ichihara T."/>
            <person name="Shiohata N."/>
            <person name="Sano S."/>
            <person name="Moriya S."/>
            <person name="Momiyama H."/>
            <person name="Satoh N."/>
            <person name="Takami S."/>
            <person name="Terashima Y."/>
            <person name="Suzuki O."/>
            <person name="Nakagawa S."/>
            <person name="Senoh A."/>
            <person name="Mizoguchi H."/>
            <person name="Goto Y."/>
            <person name="Shimizu F."/>
            <person name="Wakebe H."/>
            <person name="Hishigaki H."/>
            <person name="Watanabe T."/>
            <person name="Sugiyama A."/>
            <person name="Takemoto M."/>
            <person name="Kawakami B."/>
            <person name="Yamazaki M."/>
            <person name="Watanabe K."/>
            <person name="Kumagai A."/>
            <person name="Itakura S."/>
            <person name="Fukuzumi Y."/>
            <person name="Fujimori Y."/>
            <person name="Komiyama M."/>
            <person name="Tashiro H."/>
            <person name="Tanigami A."/>
            <person name="Fujiwara T."/>
            <person name="Ono T."/>
            <person name="Yamada K."/>
            <person name="Fujii Y."/>
            <person name="Ozaki K."/>
            <person name="Hirao M."/>
            <person name="Ohmori Y."/>
            <person name="Kawabata A."/>
            <person name="Hikiji T."/>
            <person name="Kobatake N."/>
            <person name="Inagaki H."/>
            <person name="Ikema Y."/>
            <person name="Okamoto S."/>
            <person name="Okitani R."/>
            <person name="Kawakami T."/>
            <person name="Noguchi S."/>
            <person name="Itoh T."/>
            <person name="Shigeta K."/>
            <person name="Senba T."/>
            <person name="Matsumura K."/>
            <person name="Nakajima Y."/>
            <person name="Mizuno T."/>
            <person name="Morinaga M."/>
            <person name="Sasaki M."/>
            <person name="Togashi T."/>
            <person name="Oyama M."/>
            <person name="Hata H."/>
            <person name="Watanabe M."/>
            <person name="Komatsu T."/>
            <person name="Mizushima-Sugano J."/>
            <person name="Satoh T."/>
            <person name="Shirai Y."/>
            <person name="Takahashi Y."/>
            <person name="Nakagawa K."/>
            <person name="Okumura K."/>
            <person name="Nagase T."/>
            <person name="Nomura N."/>
            <person name="Kikuchi H."/>
            <person name="Masuho Y."/>
            <person name="Yamashita R."/>
            <person name="Nakai K."/>
            <person name="Yada T."/>
            <person name="Nakamura Y."/>
            <person name="Ohara O."/>
            <person name="Isogai T."/>
            <person name="Sugano S."/>
        </authorList>
    </citation>
    <scope>NUCLEOTIDE SEQUENCE [LARGE SCALE MRNA] (ISOFORM 2)</scope>
</reference>
<reference key="5">
    <citation type="journal article" date="2006" name="Nature">
        <title>The DNA sequence and biological annotation of human chromosome 1.</title>
        <authorList>
            <person name="Gregory S.G."/>
            <person name="Barlow K.F."/>
            <person name="McLay K.E."/>
            <person name="Kaul R."/>
            <person name="Swarbreck D."/>
            <person name="Dunham A."/>
            <person name="Scott C.E."/>
            <person name="Howe K.L."/>
            <person name="Woodfine K."/>
            <person name="Spencer C.C.A."/>
            <person name="Jones M.C."/>
            <person name="Gillson C."/>
            <person name="Searle S."/>
            <person name="Zhou Y."/>
            <person name="Kokocinski F."/>
            <person name="McDonald L."/>
            <person name="Evans R."/>
            <person name="Phillips K."/>
            <person name="Atkinson A."/>
            <person name="Cooper R."/>
            <person name="Jones C."/>
            <person name="Hall R.E."/>
            <person name="Andrews T.D."/>
            <person name="Lloyd C."/>
            <person name="Ainscough R."/>
            <person name="Almeida J.P."/>
            <person name="Ambrose K.D."/>
            <person name="Anderson F."/>
            <person name="Andrew R.W."/>
            <person name="Ashwell R.I.S."/>
            <person name="Aubin K."/>
            <person name="Babbage A.K."/>
            <person name="Bagguley C.L."/>
            <person name="Bailey J."/>
            <person name="Beasley H."/>
            <person name="Bethel G."/>
            <person name="Bird C.P."/>
            <person name="Bray-Allen S."/>
            <person name="Brown J.Y."/>
            <person name="Brown A.J."/>
            <person name="Buckley D."/>
            <person name="Burton J."/>
            <person name="Bye J."/>
            <person name="Carder C."/>
            <person name="Chapman J.C."/>
            <person name="Clark S.Y."/>
            <person name="Clarke G."/>
            <person name="Clee C."/>
            <person name="Cobley V."/>
            <person name="Collier R.E."/>
            <person name="Corby N."/>
            <person name="Coville G.J."/>
            <person name="Davies J."/>
            <person name="Deadman R."/>
            <person name="Dunn M."/>
            <person name="Earthrowl M."/>
            <person name="Ellington A.G."/>
            <person name="Errington H."/>
            <person name="Frankish A."/>
            <person name="Frankland J."/>
            <person name="French L."/>
            <person name="Garner P."/>
            <person name="Garnett J."/>
            <person name="Gay L."/>
            <person name="Ghori M.R.J."/>
            <person name="Gibson R."/>
            <person name="Gilby L.M."/>
            <person name="Gillett W."/>
            <person name="Glithero R.J."/>
            <person name="Grafham D.V."/>
            <person name="Griffiths C."/>
            <person name="Griffiths-Jones S."/>
            <person name="Grocock R."/>
            <person name="Hammond S."/>
            <person name="Harrison E.S.I."/>
            <person name="Hart E."/>
            <person name="Haugen E."/>
            <person name="Heath P.D."/>
            <person name="Holmes S."/>
            <person name="Holt K."/>
            <person name="Howden P.J."/>
            <person name="Hunt A.R."/>
            <person name="Hunt S.E."/>
            <person name="Hunter G."/>
            <person name="Isherwood J."/>
            <person name="James R."/>
            <person name="Johnson C."/>
            <person name="Johnson D."/>
            <person name="Joy A."/>
            <person name="Kay M."/>
            <person name="Kershaw J.K."/>
            <person name="Kibukawa M."/>
            <person name="Kimberley A.M."/>
            <person name="King A."/>
            <person name="Knights A.J."/>
            <person name="Lad H."/>
            <person name="Laird G."/>
            <person name="Lawlor S."/>
            <person name="Leongamornlert D.A."/>
            <person name="Lloyd D.M."/>
            <person name="Loveland J."/>
            <person name="Lovell J."/>
            <person name="Lush M.J."/>
            <person name="Lyne R."/>
            <person name="Martin S."/>
            <person name="Mashreghi-Mohammadi M."/>
            <person name="Matthews L."/>
            <person name="Matthews N.S.W."/>
            <person name="McLaren S."/>
            <person name="Milne S."/>
            <person name="Mistry S."/>
            <person name="Moore M.J.F."/>
            <person name="Nickerson T."/>
            <person name="O'Dell C.N."/>
            <person name="Oliver K."/>
            <person name="Palmeiri A."/>
            <person name="Palmer S.A."/>
            <person name="Parker A."/>
            <person name="Patel D."/>
            <person name="Pearce A.V."/>
            <person name="Peck A.I."/>
            <person name="Pelan S."/>
            <person name="Phelps K."/>
            <person name="Phillimore B.J."/>
            <person name="Plumb R."/>
            <person name="Rajan J."/>
            <person name="Raymond C."/>
            <person name="Rouse G."/>
            <person name="Saenphimmachak C."/>
            <person name="Sehra H.K."/>
            <person name="Sheridan E."/>
            <person name="Shownkeen R."/>
            <person name="Sims S."/>
            <person name="Skuce C.D."/>
            <person name="Smith M."/>
            <person name="Steward C."/>
            <person name="Subramanian S."/>
            <person name="Sycamore N."/>
            <person name="Tracey A."/>
            <person name="Tromans A."/>
            <person name="Van Helmond Z."/>
            <person name="Wall M."/>
            <person name="Wallis J.M."/>
            <person name="White S."/>
            <person name="Whitehead S.L."/>
            <person name="Wilkinson J.E."/>
            <person name="Willey D.L."/>
            <person name="Williams H."/>
            <person name="Wilming L."/>
            <person name="Wray P.W."/>
            <person name="Wu Z."/>
            <person name="Coulson A."/>
            <person name="Vaudin M."/>
            <person name="Sulston J.E."/>
            <person name="Durbin R.M."/>
            <person name="Hubbard T."/>
            <person name="Wooster R."/>
            <person name="Dunham I."/>
            <person name="Carter N.P."/>
            <person name="McVean G."/>
            <person name="Ross M.T."/>
            <person name="Harrow J."/>
            <person name="Olson M.V."/>
            <person name="Beck S."/>
            <person name="Rogers J."/>
            <person name="Bentley D.R."/>
        </authorList>
    </citation>
    <scope>NUCLEOTIDE SEQUENCE [LARGE SCALE GENOMIC DNA]</scope>
</reference>
<reference key="6">
    <citation type="journal article" date="2004" name="Genome Res.">
        <title>The status, quality, and expansion of the NIH full-length cDNA project: the Mammalian Gene Collection (MGC).</title>
        <authorList>
            <consortium name="The MGC Project Team"/>
        </authorList>
    </citation>
    <scope>NUCLEOTIDE SEQUENCE [LARGE SCALE MRNA] (ISOFORM 1)</scope>
    <scope>VARIANT HIS-586</scope>
    <source>
        <tissue>Lung</tissue>
    </source>
</reference>
<reference key="7">
    <citation type="journal article" date="1999" name="Biochim. Biophys. Acta">
        <title>Identification and characterization of the mouse cDNA encoding acyl-CoA:dihydroxyacetone phosphate acyltransferase.</title>
        <authorList>
            <person name="Ofman R."/>
            <person name="Hogenhout E.M."/>
            <person name="Wanders R.J.A."/>
        </authorList>
    </citation>
    <scope>CATALYTIC ACTIVITY</scope>
</reference>
<reference key="8">
    <citation type="journal article" date="2005" name="J. Lipid Res.">
        <title>Role of dihydroxyacetonephosphate acyltransferase in the biosynthesis of plasmalogens and nonether glycerolipids.</title>
        <authorList>
            <person name="Liu D."/>
            <person name="Nagan N."/>
            <person name="Just W.W."/>
            <person name="Rodemer C."/>
            <person name="Thai T.P."/>
            <person name="Zoeller R.A."/>
        </authorList>
    </citation>
    <scope>FUNCTION</scope>
    <scope>CATALYTIC ACTIVITY</scope>
    <scope>SUBCELLULAR LOCATION</scope>
    <scope>PATHWAY</scope>
</reference>
<reference key="9">
    <citation type="journal article" date="2009" name="Science">
        <title>Lysine acetylation targets protein complexes and co-regulates major cellular functions.</title>
        <authorList>
            <person name="Choudhary C."/>
            <person name="Kumar C."/>
            <person name="Gnad F."/>
            <person name="Nielsen M.L."/>
            <person name="Rehman M."/>
            <person name="Walther T.C."/>
            <person name="Olsen J.V."/>
            <person name="Mann M."/>
        </authorList>
    </citation>
    <scope>ACETYLATION [LARGE SCALE ANALYSIS] AT LYS-643</scope>
    <scope>IDENTIFICATION BY MASS SPECTROMETRY [LARGE SCALE ANALYSIS]</scope>
</reference>
<reference key="10">
    <citation type="journal article" date="2011" name="BMC Syst. Biol.">
        <title>Initial characterization of the human central proteome.</title>
        <authorList>
            <person name="Burkard T.R."/>
            <person name="Planyavsky M."/>
            <person name="Kaupe I."/>
            <person name="Breitwieser F.P."/>
            <person name="Buerckstuemmer T."/>
            <person name="Bennett K.L."/>
            <person name="Superti-Furga G."/>
            <person name="Colinge J."/>
        </authorList>
    </citation>
    <scope>IDENTIFICATION BY MASS SPECTROMETRY [LARGE SCALE ANALYSIS]</scope>
</reference>
<reference key="11">
    <citation type="journal article" date="2012" name="Hum. Mutat.">
        <title>Functional characterization of novel mutations in GNPAT and AGPS, causing rhizomelic chondrodysplasia punctata (RCDP) types 2 and 3.</title>
        <authorList>
            <person name="Itzkovitz B."/>
            <person name="Jiralerspong S."/>
            <person name="Nimmo G."/>
            <person name="Loscalzo M."/>
            <person name="Horovitz D.D."/>
            <person name="Snowden A."/>
            <person name="Moser A."/>
            <person name="Steinberg S."/>
            <person name="Braverman N."/>
        </authorList>
    </citation>
    <scope>INVOLVEMENT IN RCDP2</scope>
</reference>
<reference key="12">
    <citation type="journal article" date="2015" name="Proteomics">
        <title>N-terminome analysis of the human mitochondrial proteome.</title>
        <authorList>
            <person name="Vaca Jacome A.S."/>
            <person name="Rabilloud T."/>
            <person name="Schaeffer-Reiss C."/>
            <person name="Rompais M."/>
            <person name="Ayoub D."/>
            <person name="Lane L."/>
            <person name="Bairoch A."/>
            <person name="Van Dorsselaer A."/>
            <person name="Carapito C."/>
        </authorList>
    </citation>
    <scope>IDENTIFICATION BY MASS SPECTROMETRY [LARGE SCALE ANALYSIS]</scope>
</reference>
<reference key="13">
    <citation type="journal article" date="2001" name="Hum. Mol. Genet.">
        <title>Impaired membrane traffic in defective ether lipid biosynthesis.</title>
        <authorList>
            <person name="Thai T.P."/>
            <person name="Rodemer C."/>
            <person name="Jauch A."/>
            <person name="Hunziker A."/>
            <person name="Moser A."/>
            <person name="Gorgas K."/>
            <person name="Just W.W."/>
        </authorList>
    </citation>
    <scope>VARIANTS RCDP2 HIS-211 AND GLY-519</scope>
    <scope>CHARACTERIZATION OF VARIANTS RCDP2 HIS-211 AND GLY-519</scope>
    <scope>FUNCTION</scope>
    <scope>CATALYTIC ACTIVITY</scope>
    <scope>PATHWAY</scope>
</reference>
<accession>O15228</accession>
<accession>B4DNM9</accession>
<accession>Q5TBH7</accession>
<accession>Q9BWC2</accession>
<protein>
    <recommendedName>
        <fullName evidence="18">Dihydroxyacetone phosphate acyltransferase</fullName>
        <shortName evidence="15">DAP-AT</shortName>
        <shortName evidence="12">DAPAT</shortName>
        <shortName evidence="14">DHAP-AT</shortName>
        <ecNumber evidence="6 7 9">2.3.1.42</ecNumber>
    </recommendedName>
    <alternativeName>
        <fullName evidence="16">Acyl-CoA:dihydroxyacetonephosphateacyltransferase</fullName>
    </alternativeName>
    <alternativeName>
        <fullName evidence="19">Glycerone-phosphate O-acyltransferase</fullName>
    </alternativeName>
</protein>
<feature type="chain" id="PRO_0000195246" description="Dihydroxyacetone phosphate acyltransferase">
    <location>
        <begin position="1"/>
        <end position="680"/>
    </location>
</feature>
<feature type="short sequence motif" description="HXXXXD motif" evidence="2">
    <location>
        <begin position="162"/>
        <end position="167"/>
    </location>
</feature>
<feature type="short sequence motif" description="Microbody targeting signal" evidence="5">
    <location>
        <begin position="678"/>
        <end position="680"/>
    </location>
</feature>
<feature type="modified residue" description="Phosphoserine" evidence="3">
    <location>
        <position position="12"/>
    </location>
</feature>
<feature type="modified residue" description="Phosphoserine" evidence="4">
    <location>
        <position position="17"/>
    </location>
</feature>
<feature type="modified residue" description="N6-acetyllysine" evidence="20">
    <location>
        <position position="643"/>
    </location>
</feature>
<feature type="splice variant" id="VSP_056435" description="In isoform 2." evidence="13">
    <location>
        <begin position="27"/>
        <end position="87"/>
    </location>
</feature>
<feature type="sequence variant" id="VAR_006357" description="In RCDP2; dbSNP:rs121434440." evidence="11">
    <original>R</original>
    <variation>C</variation>
    <location>
        <position position="211"/>
    </location>
</feature>
<feature type="sequence variant" id="VAR_006358" description="In RCDP2; loss of glycerone-phosphate O-acyltransferase activity; dbSNP:rs121434439." evidence="11">
    <original>R</original>
    <variation>H</variation>
    <location>
        <position position="211"/>
    </location>
</feature>
<feature type="sequence variant" id="VAR_030696" description="In dbSNP:rs11122266.">
    <original>V</original>
    <variation>I</variation>
    <location>
        <position position="495"/>
    </location>
</feature>
<feature type="sequence variant" id="VAR_025897" description="In RCDP2; likely benign; decreased glycerone-phosphate O-acyltransferase activity; dbSNP:rs11558492." evidence="7">
    <original>D</original>
    <variation>G</variation>
    <location>
        <position position="519"/>
    </location>
</feature>
<feature type="sequence variant" id="VAR_030697" description="In dbSNP:rs17849315." evidence="8">
    <original>Y</original>
    <variation>H</variation>
    <location>
        <position position="586"/>
    </location>
</feature>
<feature type="sequence conflict" description="In Ref. 2; AA sequence." evidence="17" ref="2">
    <original>S</original>
    <variation>K</variation>
    <location>
        <position position="26"/>
    </location>
</feature>
<feature type="sequence conflict" description="In Ref. 2; AA sequence." evidence="17" ref="2">
    <original>K</original>
    <variation>N</variation>
    <location>
        <position position="31"/>
    </location>
</feature>
<dbReference type="EC" id="2.3.1.42" evidence="6 7 9"/>
<dbReference type="EMBL" id="AJ002190">
    <property type="protein sequence ID" value="CAA05242.1"/>
    <property type="molecule type" value="mRNA"/>
</dbReference>
<dbReference type="EMBL" id="AF043937">
    <property type="protein sequence ID" value="AAC24505.1"/>
    <property type="molecule type" value="mRNA"/>
</dbReference>
<dbReference type="EMBL" id="AF218233">
    <property type="protein sequence ID" value="AAG17547.1"/>
    <property type="molecule type" value="Genomic_DNA"/>
</dbReference>
<dbReference type="EMBL" id="AF218223">
    <property type="protein sequence ID" value="AAG17547.1"/>
    <property type="status" value="JOINED"/>
    <property type="molecule type" value="Genomic_DNA"/>
</dbReference>
<dbReference type="EMBL" id="AF218224">
    <property type="protein sequence ID" value="AAG17547.1"/>
    <property type="status" value="JOINED"/>
    <property type="molecule type" value="Genomic_DNA"/>
</dbReference>
<dbReference type="EMBL" id="AF218225">
    <property type="protein sequence ID" value="AAG17547.1"/>
    <property type="status" value="JOINED"/>
    <property type="molecule type" value="Genomic_DNA"/>
</dbReference>
<dbReference type="EMBL" id="AF218226">
    <property type="protein sequence ID" value="AAG17547.1"/>
    <property type="status" value="JOINED"/>
    <property type="molecule type" value="Genomic_DNA"/>
</dbReference>
<dbReference type="EMBL" id="AF218227">
    <property type="protein sequence ID" value="AAG17547.1"/>
    <property type="status" value="JOINED"/>
    <property type="molecule type" value="Genomic_DNA"/>
</dbReference>
<dbReference type="EMBL" id="AF218228">
    <property type="protein sequence ID" value="AAG17547.1"/>
    <property type="status" value="JOINED"/>
    <property type="molecule type" value="Genomic_DNA"/>
</dbReference>
<dbReference type="EMBL" id="AF218229">
    <property type="protein sequence ID" value="AAG17547.1"/>
    <property type="status" value="JOINED"/>
    <property type="molecule type" value="Genomic_DNA"/>
</dbReference>
<dbReference type="EMBL" id="AF218230">
    <property type="protein sequence ID" value="AAG17547.1"/>
    <property type="status" value="JOINED"/>
    <property type="molecule type" value="Genomic_DNA"/>
</dbReference>
<dbReference type="EMBL" id="AF218231">
    <property type="protein sequence ID" value="AAG17547.1"/>
    <property type="status" value="JOINED"/>
    <property type="molecule type" value="Genomic_DNA"/>
</dbReference>
<dbReference type="EMBL" id="AF218232">
    <property type="protein sequence ID" value="AAG17547.1"/>
    <property type="status" value="JOINED"/>
    <property type="molecule type" value="Genomic_DNA"/>
</dbReference>
<dbReference type="EMBL" id="AK297982">
    <property type="protein sequence ID" value="BAG60291.1"/>
    <property type="molecule type" value="mRNA"/>
</dbReference>
<dbReference type="EMBL" id="AL117352">
    <property type="status" value="NOT_ANNOTATED_CDS"/>
    <property type="molecule type" value="Genomic_DNA"/>
</dbReference>
<dbReference type="EMBL" id="AL137801">
    <property type="status" value="NOT_ANNOTATED_CDS"/>
    <property type="molecule type" value="Genomic_DNA"/>
</dbReference>
<dbReference type="EMBL" id="BC000450">
    <property type="protein sequence ID" value="AAH00450.1"/>
    <property type="molecule type" value="mRNA"/>
</dbReference>
<dbReference type="CCDS" id="CCDS1592.1">
    <molecule id="O15228-1"/>
</dbReference>
<dbReference type="RefSeq" id="NP_001303279.1">
    <molecule id="O15228-2"/>
    <property type="nucleotide sequence ID" value="NM_001316350.2"/>
</dbReference>
<dbReference type="RefSeq" id="NP_055051.1">
    <molecule id="O15228-1"/>
    <property type="nucleotide sequence ID" value="NM_014236.4"/>
</dbReference>
<dbReference type="SMR" id="O15228"/>
<dbReference type="BioGRID" id="114021">
    <property type="interactions" value="88"/>
</dbReference>
<dbReference type="CORUM" id="O15228"/>
<dbReference type="FunCoup" id="O15228">
    <property type="interactions" value="2643"/>
</dbReference>
<dbReference type="IntAct" id="O15228">
    <property type="interactions" value="61"/>
</dbReference>
<dbReference type="STRING" id="9606.ENSP00000355607"/>
<dbReference type="BindingDB" id="O15228"/>
<dbReference type="ChEMBL" id="CHEMBL4494"/>
<dbReference type="SwissLipids" id="SLP:000000148"/>
<dbReference type="GlyGen" id="O15228">
    <property type="glycosylation" value="2 sites, 1 O-linked glycan (1 site)"/>
</dbReference>
<dbReference type="iPTMnet" id="O15228"/>
<dbReference type="MetOSite" id="O15228"/>
<dbReference type="PhosphoSitePlus" id="O15228"/>
<dbReference type="SwissPalm" id="O15228"/>
<dbReference type="BioMuta" id="GNPAT"/>
<dbReference type="jPOST" id="O15228"/>
<dbReference type="MassIVE" id="O15228"/>
<dbReference type="PaxDb" id="9606-ENSP00000355607"/>
<dbReference type="PeptideAtlas" id="O15228"/>
<dbReference type="ProteomicsDB" id="4711"/>
<dbReference type="ProteomicsDB" id="48518">
    <molecule id="O15228-1"/>
</dbReference>
<dbReference type="Pumba" id="O15228"/>
<dbReference type="Antibodypedia" id="34685">
    <property type="antibodies" value="273 antibodies from 31 providers"/>
</dbReference>
<dbReference type="DNASU" id="8443"/>
<dbReference type="Ensembl" id="ENST00000366647.9">
    <molecule id="O15228-1"/>
    <property type="protein sequence ID" value="ENSP00000355607.4"/>
    <property type="gene ID" value="ENSG00000116906.13"/>
</dbReference>
<dbReference type="GeneID" id="8443"/>
<dbReference type="KEGG" id="hsa:8443"/>
<dbReference type="MANE-Select" id="ENST00000366647.9">
    <property type="protein sequence ID" value="ENSP00000355607.4"/>
    <property type="RefSeq nucleotide sequence ID" value="NM_014236.4"/>
    <property type="RefSeq protein sequence ID" value="NP_055051.1"/>
</dbReference>
<dbReference type="UCSC" id="uc001hup.5">
    <molecule id="O15228-1"/>
    <property type="organism name" value="human"/>
</dbReference>
<dbReference type="AGR" id="HGNC:4416"/>
<dbReference type="CTD" id="8443"/>
<dbReference type="DisGeNET" id="8443"/>
<dbReference type="GeneCards" id="GNPAT"/>
<dbReference type="HGNC" id="HGNC:4416">
    <property type="gene designation" value="GNPAT"/>
</dbReference>
<dbReference type="HPA" id="ENSG00000116906">
    <property type="expression patterns" value="Low tissue specificity"/>
</dbReference>
<dbReference type="MalaCards" id="GNPAT"/>
<dbReference type="MIM" id="222765">
    <property type="type" value="phenotype"/>
</dbReference>
<dbReference type="MIM" id="602744">
    <property type="type" value="gene"/>
</dbReference>
<dbReference type="neXtProt" id="NX_O15228"/>
<dbReference type="OpenTargets" id="ENSG00000116906"/>
<dbReference type="Orphanet" id="309796">
    <property type="disease" value="Rhizomelic chondrodysplasia punctata type 2"/>
</dbReference>
<dbReference type="PharmGKB" id="PA28795"/>
<dbReference type="VEuPathDB" id="HostDB:ENSG00000116906"/>
<dbReference type="eggNOG" id="KOG3730">
    <property type="taxonomic scope" value="Eukaryota"/>
</dbReference>
<dbReference type="GeneTree" id="ENSGT00520000055570"/>
<dbReference type="InParanoid" id="O15228"/>
<dbReference type="OMA" id="RFNLEWY"/>
<dbReference type="OrthoDB" id="10255570at2759"/>
<dbReference type="PAN-GO" id="O15228">
    <property type="GO annotations" value="6 GO annotations based on evolutionary models"/>
</dbReference>
<dbReference type="PhylomeDB" id="O15228"/>
<dbReference type="TreeFam" id="TF313360"/>
<dbReference type="BioCyc" id="MetaCyc:HS04068-MONOMER"/>
<dbReference type="BRENDA" id="2.3.1.42">
    <property type="organism ID" value="2681"/>
</dbReference>
<dbReference type="PathwayCommons" id="O15228"/>
<dbReference type="Reactome" id="R-HSA-1483166">
    <property type="pathway name" value="Synthesis of PA"/>
</dbReference>
<dbReference type="Reactome" id="R-HSA-75896">
    <property type="pathway name" value="Plasmalogen biosynthesis"/>
</dbReference>
<dbReference type="Reactome" id="R-HSA-9033241">
    <property type="pathway name" value="Peroxisomal protein import"/>
</dbReference>
<dbReference type="SignaLink" id="O15228"/>
<dbReference type="UniPathway" id="UPA00940"/>
<dbReference type="BioGRID-ORCS" id="8443">
    <property type="hits" value="29 hits in 1159 CRISPR screens"/>
</dbReference>
<dbReference type="CD-CODE" id="FB4E32DD">
    <property type="entry name" value="Presynaptic clusters and postsynaptic densities"/>
</dbReference>
<dbReference type="ChiTaRS" id="GNPAT">
    <property type="organism name" value="human"/>
</dbReference>
<dbReference type="GenomeRNAi" id="8443"/>
<dbReference type="Pharos" id="O15228">
    <property type="development level" value="Tchem"/>
</dbReference>
<dbReference type="PRO" id="PR:O15228"/>
<dbReference type="Proteomes" id="UP000005640">
    <property type="component" value="Chromosome 1"/>
</dbReference>
<dbReference type="RNAct" id="O15228">
    <property type="molecule type" value="protein"/>
</dbReference>
<dbReference type="Bgee" id="ENSG00000116906">
    <property type="expression patterns" value="Expressed in gluteal muscle and 213 other cell types or tissues"/>
</dbReference>
<dbReference type="ExpressionAtlas" id="O15228">
    <property type="expression patterns" value="baseline and differential"/>
</dbReference>
<dbReference type="GO" id="GO:0030054">
    <property type="term" value="C:cell junction"/>
    <property type="evidence" value="ECO:0000314"/>
    <property type="project" value="HPA"/>
</dbReference>
<dbReference type="GO" id="GO:0005829">
    <property type="term" value="C:cytosol"/>
    <property type="evidence" value="ECO:0000304"/>
    <property type="project" value="Reactome"/>
</dbReference>
<dbReference type="GO" id="GO:0043231">
    <property type="term" value="C:intracellular membrane-bounded organelle"/>
    <property type="evidence" value="ECO:0000314"/>
    <property type="project" value="HPA"/>
</dbReference>
<dbReference type="GO" id="GO:0016020">
    <property type="term" value="C:membrane"/>
    <property type="evidence" value="ECO:0007005"/>
    <property type="project" value="UniProtKB"/>
</dbReference>
<dbReference type="GO" id="GO:0005782">
    <property type="term" value="C:peroxisomal matrix"/>
    <property type="evidence" value="ECO:0000304"/>
    <property type="project" value="Reactome"/>
</dbReference>
<dbReference type="GO" id="GO:0005778">
    <property type="term" value="C:peroxisomal membrane"/>
    <property type="evidence" value="ECO:0007005"/>
    <property type="project" value="UniProtKB"/>
</dbReference>
<dbReference type="GO" id="GO:0005777">
    <property type="term" value="C:peroxisome"/>
    <property type="evidence" value="ECO:0000314"/>
    <property type="project" value="UniProtKB"/>
</dbReference>
<dbReference type="GO" id="GO:0016287">
    <property type="term" value="F:glycerone-phosphate O-acyltransferase activity"/>
    <property type="evidence" value="ECO:0000314"/>
    <property type="project" value="UniProtKB"/>
</dbReference>
<dbReference type="GO" id="GO:0021587">
    <property type="term" value="P:cerebellum morphogenesis"/>
    <property type="evidence" value="ECO:0007669"/>
    <property type="project" value="Ensembl"/>
</dbReference>
<dbReference type="GO" id="GO:0008611">
    <property type="term" value="P:ether lipid biosynthetic process"/>
    <property type="evidence" value="ECO:0000314"/>
    <property type="project" value="UniProtKB"/>
</dbReference>
<dbReference type="GO" id="GO:0061024">
    <property type="term" value="P:membrane organization"/>
    <property type="evidence" value="ECO:0007669"/>
    <property type="project" value="Ensembl"/>
</dbReference>
<dbReference type="GO" id="GO:0030913">
    <property type="term" value="P:paranodal junction assembly"/>
    <property type="evidence" value="ECO:0007669"/>
    <property type="project" value="Ensembl"/>
</dbReference>
<dbReference type="GO" id="GO:0006654">
    <property type="term" value="P:phosphatidic acid biosynthetic process"/>
    <property type="evidence" value="ECO:0000304"/>
    <property type="project" value="Reactome"/>
</dbReference>
<dbReference type="GO" id="GO:0007416">
    <property type="term" value="P:synapse assembly"/>
    <property type="evidence" value="ECO:0007669"/>
    <property type="project" value="Ensembl"/>
</dbReference>
<dbReference type="CDD" id="cd07993">
    <property type="entry name" value="LPLAT_DHAPAT-like"/>
    <property type="match status" value="1"/>
</dbReference>
<dbReference type="InterPro" id="IPR028353">
    <property type="entry name" value="DHAPAT"/>
</dbReference>
<dbReference type="InterPro" id="IPR022284">
    <property type="entry name" value="GPAT/DHAPAT"/>
</dbReference>
<dbReference type="InterPro" id="IPR045520">
    <property type="entry name" value="GPAT/DHAPAT_C"/>
</dbReference>
<dbReference type="InterPro" id="IPR041728">
    <property type="entry name" value="GPAT/DHAPAT_LPLAT"/>
</dbReference>
<dbReference type="InterPro" id="IPR002123">
    <property type="entry name" value="Plipid/glycerol_acylTrfase"/>
</dbReference>
<dbReference type="PANTHER" id="PTHR12563:SF17">
    <property type="entry name" value="DIHYDROXYACETONE PHOSPHATE ACYLTRANSFERASE"/>
    <property type="match status" value="1"/>
</dbReference>
<dbReference type="PANTHER" id="PTHR12563">
    <property type="entry name" value="GLYCEROL-3-PHOSPHATE ACYLTRANSFERASE"/>
    <property type="match status" value="1"/>
</dbReference>
<dbReference type="Pfam" id="PF01553">
    <property type="entry name" value="Acyltransferase"/>
    <property type="match status" value="1"/>
</dbReference>
<dbReference type="Pfam" id="PF19277">
    <property type="entry name" value="GPAT_C"/>
    <property type="match status" value="1"/>
</dbReference>
<dbReference type="PIRSF" id="PIRSF500063">
    <property type="entry name" value="DHAPAT"/>
    <property type="match status" value="1"/>
</dbReference>
<dbReference type="PIRSF" id="PIRSF000437">
    <property type="entry name" value="GPAT_DHAPAT"/>
    <property type="match status" value="1"/>
</dbReference>
<dbReference type="SMART" id="SM00563">
    <property type="entry name" value="PlsC"/>
    <property type="match status" value="1"/>
</dbReference>
<dbReference type="SUPFAM" id="SSF69593">
    <property type="entry name" value="Glycerol-3-phosphate (1)-acyltransferase"/>
    <property type="match status" value="1"/>
</dbReference>
<keyword id="KW-0007">Acetylation</keyword>
<keyword id="KW-0012">Acyltransferase</keyword>
<keyword id="KW-0025">Alternative splicing</keyword>
<keyword id="KW-0898">Cataract</keyword>
<keyword id="KW-0903">Direct protein sequencing</keyword>
<keyword id="KW-0225">Disease variant</keyword>
<keyword id="KW-0242">Dwarfism</keyword>
<keyword id="KW-0472">Membrane</keyword>
<keyword id="KW-0576">Peroxisome</keyword>
<keyword id="KW-0597">Phosphoprotein</keyword>
<keyword id="KW-1267">Proteomics identification</keyword>
<keyword id="KW-1185">Reference proteome</keyword>
<keyword id="KW-0685">Rhizomelic chondrodysplasia punctata</keyword>
<keyword id="KW-0808">Transferase</keyword>
<gene>
    <name evidence="19" type="primary">GNPAT</name>
    <name evidence="12" type="synonym">DAPAT</name>
    <name evidence="14" type="synonym">DHAPAT</name>
</gene>
<organism>
    <name type="scientific">Homo sapiens</name>
    <name type="common">Human</name>
    <dbReference type="NCBI Taxonomy" id="9606"/>
    <lineage>
        <taxon>Eukaryota</taxon>
        <taxon>Metazoa</taxon>
        <taxon>Chordata</taxon>
        <taxon>Craniata</taxon>
        <taxon>Vertebrata</taxon>
        <taxon>Euteleostomi</taxon>
        <taxon>Mammalia</taxon>
        <taxon>Eutheria</taxon>
        <taxon>Euarchontoglires</taxon>
        <taxon>Primates</taxon>
        <taxon>Haplorrhini</taxon>
        <taxon>Catarrhini</taxon>
        <taxon>Hominidae</taxon>
        <taxon>Homo</taxon>
    </lineage>
</organism>
<comment type="function">
    <text evidence="7 9">Dihydroxyacetonephosphate acyltransferase catalyzing the first step in the biosynthesis of plasmalogens, a subset of phospholipids that differ from other glycerolipids by having an alkyl chain attached through a vinyl ether linkage at the sn-1 position of the glycerol backbone, and which unique physical properties have an impact on various aspects of cell signaling and membrane biology.</text>
</comment>
<comment type="catalytic activity">
    <reaction evidence="6 7 9">
        <text>dihydroxyacetone phosphate + an acyl-CoA = a 1-acylglycerone 3-phosphate + CoA</text>
        <dbReference type="Rhea" id="RHEA:17657"/>
        <dbReference type="ChEBI" id="CHEBI:57287"/>
        <dbReference type="ChEBI" id="CHEBI:57534"/>
        <dbReference type="ChEBI" id="CHEBI:57642"/>
        <dbReference type="ChEBI" id="CHEBI:58342"/>
        <dbReference type="EC" id="2.3.1.42"/>
    </reaction>
    <physiologicalReaction direction="left-to-right" evidence="7">
        <dbReference type="Rhea" id="RHEA:17658"/>
    </physiologicalReaction>
</comment>
<comment type="catalytic activity">
    <reaction evidence="6 7 9">
        <text>dihydroxyacetone phosphate + hexadecanoyl-CoA = 1-hexadecanoylglycerone 3-phosphate + CoA</text>
        <dbReference type="Rhea" id="RHEA:40715"/>
        <dbReference type="ChEBI" id="CHEBI:57287"/>
        <dbReference type="ChEBI" id="CHEBI:57379"/>
        <dbReference type="ChEBI" id="CHEBI:57642"/>
        <dbReference type="ChEBI" id="CHEBI:58303"/>
    </reaction>
    <physiologicalReaction direction="left-to-right" evidence="7">
        <dbReference type="Rhea" id="RHEA:40716"/>
    </physiologicalReaction>
</comment>
<comment type="pathway">
    <text evidence="7 9">Membrane lipid metabolism; glycerophospholipid metabolism.</text>
</comment>
<comment type="subunit">
    <text evidence="1">Part of a heterotrimeric complex composed of GNPAT, AGPS and a modified form of GNPAT.</text>
</comment>
<comment type="subcellular location">
    <subcellularLocation>
        <location evidence="9">Peroxisome membrane</location>
        <topology evidence="4">Peripheral membrane protein</topology>
        <orientation evidence="4">Matrix side</orientation>
    </subcellularLocation>
    <text evidence="4">Exclusively localized to the lumenal side of the peroxisomal membrane.</text>
</comment>
<comment type="alternative products">
    <event type="alternative splicing"/>
    <isoform>
        <id>O15228-1</id>
        <name>1</name>
        <sequence type="displayed"/>
    </isoform>
    <isoform>
        <id>O15228-2</id>
        <name>2</name>
        <sequence type="described" ref="VSP_056435"/>
    </isoform>
</comment>
<comment type="domain">
    <text evidence="2">The HXXXXD motif is essential for acyltransferase activity and may constitute the binding site for the phosphate moiety of the glycerol-3-phosphate.</text>
</comment>
<comment type="disease" evidence="7 10 11">
    <disease id="DI-01002">
        <name>Rhizomelic chondrodysplasia punctata 2</name>
        <acronym>RCDP2</acronym>
        <description>A form of rhizomelic chondrodysplasia punctata, a disease characterized by severely disturbed endochondral bone formation, rhizomelic shortening of femur and humerus, vertebral disorders, dwarfism, cataract, cutaneous lesions, facial dysmorphism, and severe intellectual disability with spasticity.</description>
        <dbReference type="MIM" id="222765"/>
    </disease>
    <text>The disease is caused by variants affecting the gene represented in this entry.</text>
</comment>
<comment type="similarity">
    <text evidence="17">Belongs to the GPAT/DAPAT family.</text>
</comment>
<sequence length="680" mass="77188">MESSSSSNSYFSVGPTSPSAVVLLYSKELKKWDEFEDILEERRHVSDLKFAMKCYTPLVYKGITPCKPIDIKCSVLNSEEIHYVIKQLSKESLQSVDVLREEVSEILDEMSHKLRLGAIRFCAFTLSKVFKQIFSKVCVNEEGIQKLQRAIQEHPVVLLPSHRSYIDFLMLSFLLYNYDLPVPVIAAGMDFLGMKMVGELLRMSGAFFMRRTFGGNKLYWAVFSEYVKTMLRNGYAPVEFFLEGTRSRSAKTLTPKFGLLNIVMEPFFKREVFDTYLVPISISYDKILEETLYVYELLGVPKPKESTTGLLKARKILSENFGSIHVYFGDPVSLRSLAAGRMSRSSYNLVPRYIPQKQSEDMHAFVTEVAYKMELLQIENMVLSPWTLIVAVLLQNRPSMDFDALVEKTLWLKGLTQAFGGFLIWPDNKPAEEVVPASILLHSNIASLVKDQVILKVDSGDSEVVDGLMLQHITLLMCSAYRNQLLNIFVRPSLVAVALQMTPGFRKEDVYSCFRFLRDVFADEFIFLPGNTLKDFEEGCYLLCKSEAIQVTTKDILVTEKGNTVLEFLVGLFKPFVESYQIICKYLLSEEEDHFSEEQYLAAVRKFTSQLLDQGTSQCYDVLSSDVQKNALAACVRLGVVEKKKINNNCIFNVNEPATTKLEEMLGCKTPIGKPATAKL</sequence>